<name>NUOH2_RHOPS</name>
<protein>
    <recommendedName>
        <fullName evidence="1">NADH-quinone oxidoreductase subunit H 2</fullName>
        <ecNumber evidence="1">7.1.1.-</ecNumber>
    </recommendedName>
    <alternativeName>
        <fullName evidence="1">NADH dehydrogenase I subunit H 2</fullName>
    </alternativeName>
    <alternativeName>
        <fullName evidence="1">NDH-1 subunit H 2</fullName>
    </alternativeName>
</protein>
<comment type="function">
    <text evidence="1">NDH-1 shuttles electrons from NADH, via FMN and iron-sulfur (Fe-S) centers, to quinones in the respiratory chain. The immediate electron acceptor for the enzyme in this species is believed to be ubiquinone. Couples the redox reaction to proton translocation (for every two electrons transferred, four hydrogen ions are translocated across the cytoplasmic membrane), and thus conserves the redox energy in a proton gradient. This subunit may bind ubiquinone.</text>
</comment>
<comment type="catalytic activity">
    <reaction evidence="1">
        <text>a quinone + NADH + 5 H(+)(in) = a quinol + NAD(+) + 4 H(+)(out)</text>
        <dbReference type="Rhea" id="RHEA:57888"/>
        <dbReference type="ChEBI" id="CHEBI:15378"/>
        <dbReference type="ChEBI" id="CHEBI:24646"/>
        <dbReference type="ChEBI" id="CHEBI:57540"/>
        <dbReference type="ChEBI" id="CHEBI:57945"/>
        <dbReference type="ChEBI" id="CHEBI:132124"/>
    </reaction>
</comment>
<comment type="subunit">
    <text evidence="1">NDH-1 is composed of 14 different subunits. Subunits NuoA, H, J, K, L, M, N constitute the membrane sector of the complex.</text>
</comment>
<comment type="subcellular location">
    <subcellularLocation>
        <location evidence="1">Cell inner membrane</location>
        <topology evidence="1">Multi-pass membrane protein</topology>
    </subcellularLocation>
</comment>
<comment type="similarity">
    <text evidence="1">Belongs to the complex I subunit 1 family.</text>
</comment>
<feature type="chain" id="PRO_0000299950" description="NADH-quinone oxidoreductase subunit H 2">
    <location>
        <begin position="1"/>
        <end position="341"/>
    </location>
</feature>
<feature type="transmembrane region" description="Helical" evidence="1">
    <location>
        <begin position="13"/>
        <end position="33"/>
    </location>
</feature>
<feature type="transmembrane region" description="Helical" evidence="1">
    <location>
        <begin position="82"/>
        <end position="102"/>
    </location>
</feature>
<feature type="transmembrane region" description="Helical" evidence="1">
    <location>
        <begin position="115"/>
        <end position="135"/>
    </location>
</feature>
<feature type="transmembrane region" description="Helical" evidence="1">
    <location>
        <begin position="161"/>
        <end position="181"/>
    </location>
</feature>
<feature type="transmembrane region" description="Helical" evidence="1">
    <location>
        <begin position="190"/>
        <end position="210"/>
    </location>
</feature>
<feature type="transmembrane region" description="Helical" evidence="1">
    <location>
        <begin position="248"/>
        <end position="268"/>
    </location>
</feature>
<feature type="transmembrane region" description="Helical" evidence="1">
    <location>
        <begin position="277"/>
        <end position="297"/>
    </location>
</feature>
<feature type="transmembrane region" description="Helical" evidence="1">
    <location>
        <begin position="317"/>
        <end position="337"/>
    </location>
</feature>
<evidence type="ECO:0000255" key="1">
    <source>
        <dbReference type="HAMAP-Rule" id="MF_01350"/>
    </source>
</evidence>
<dbReference type="EC" id="7.1.1.-" evidence="1"/>
<dbReference type="EMBL" id="CP000283">
    <property type="protein sequence ID" value="ABE40106.1"/>
    <property type="molecule type" value="Genomic_DNA"/>
</dbReference>
<dbReference type="SMR" id="Q135Y3"/>
<dbReference type="STRING" id="316057.RPD_2878"/>
<dbReference type="KEGG" id="rpd:RPD_2878"/>
<dbReference type="eggNOG" id="COG1005">
    <property type="taxonomic scope" value="Bacteria"/>
</dbReference>
<dbReference type="HOGENOM" id="CLU_015134_0_1_5"/>
<dbReference type="BioCyc" id="RPAL316057:RPD_RS14460-MONOMER"/>
<dbReference type="Proteomes" id="UP000001818">
    <property type="component" value="Chromosome"/>
</dbReference>
<dbReference type="GO" id="GO:0005886">
    <property type="term" value="C:plasma membrane"/>
    <property type="evidence" value="ECO:0007669"/>
    <property type="project" value="UniProtKB-SubCell"/>
</dbReference>
<dbReference type="GO" id="GO:0003954">
    <property type="term" value="F:NADH dehydrogenase activity"/>
    <property type="evidence" value="ECO:0007669"/>
    <property type="project" value="TreeGrafter"/>
</dbReference>
<dbReference type="GO" id="GO:0016655">
    <property type="term" value="F:oxidoreductase activity, acting on NAD(P)H, quinone or similar compound as acceptor"/>
    <property type="evidence" value="ECO:0007669"/>
    <property type="project" value="UniProtKB-UniRule"/>
</dbReference>
<dbReference type="GO" id="GO:0048038">
    <property type="term" value="F:quinone binding"/>
    <property type="evidence" value="ECO:0007669"/>
    <property type="project" value="UniProtKB-KW"/>
</dbReference>
<dbReference type="GO" id="GO:0009060">
    <property type="term" value="P:aerobic respiration"/>
    <property type="evidence" value="ECO:0007669"/>
    <property type="project" value="TreeGrafter"/>
</dbReference>
<dbReference type="HAMAP" id="MF_01350">
    <property type="entry name" value="NDH1_NuoH"/>
    <property type="match status" value="1"/>
</dbReference>
<dbReference type="InterPro" id="IPR001694">
    <property type="entry name" value="NADH_UbQ_OxRdtase_su1/FPO"/>
</dbReference>
<dbReference type="InterPro" id="IPR018086">
    <property type="entry name" value="NADH_UbQ_OxRdtase_su1_CS"/>
</dbReference>
<dbReference type="NCBIfam" id="NF004741">
    <property type="entry name" value="PRK06076.1-2"/>
    <property type="match status" value="1"/>
</dbReference>
<dbReference type="NCBIfam" id="NF004745">
    <property type="entry name" value="PRK06076.1-6"/>
    <property type="match status" value="1"/>
</dbReference>
<dbReference type="PANTHER" id="PTHR11432">
    <property type="entry name" value="NADH DEHYDROGENASE SUBUNIT 1"/>
    <property type="match status" value="1"/>
</dbReference>
<dbReference type="PANTHER" id="PTHR11432:SF3">
    <property type="entry name" value="NADH-UBIQUINONE OXIDOREDUCTASE CHAIN 1"/>
    <property type="match status" value="1"/>
</dbReference>
<dbReference type="Pfam" id="PF00146">
    <property type="entry name" value="NADHdh"/>
    <property type="match status" value="1"/>
</dbReference>
<dbReference type="PROSITE" id="PS00668">
    <property type="entry name" value="COMPLEX1_ND1_2"/>
    <property type="match status" value="1"/>
</dbReference>
<sequence>MAEFFATNLWPLIIVIGQSVLLLVLLLISIAYILLADRKIWAAVQLRRGPNVVGPWGLLQSFADLLKFVVKEPTVPSGANKGVFLLAPLVTCVLALAAWAVIPVNAGWVIADINVGVLYILAVSSLSVYGIIMAGWSSNSKYPFLAALRSAAQMVSYEVSIGFVVICVLLCVGSLNLTAIVEAQNSQWGMLGWYWLPLFPMFVVFYVSALAETNRPPFDLVEAESELVAGFMVEYSSTPYLLFMLGEYVAIVTMCAMGTILFLGGWLPPVPYAPFTWVPGIVWFALKVLFMFFLFAMAKAIVPRYRYDQLMRLGWKVFLPLSLAMVVIVAAVLQFAGLAPK</sequence>
<accession>Q135Y3</accession>
<organism>
    <name type="scientific">Rhodopseudomonas palustris (strain BisB5)</name>
    <dbReference type="NCBI Taxonomy" id="316057"/>
    <lineage>
        <taxon>Bacteria</taxon>
        <taxon>Pseudomonadati</taxon>
        <taxon>Pseudomonadota</taxon>
        <taxon>Alphaproteobacteria</taxon>
        <taxon>Hyphomicrobiales</taxon>
        <taxon>Nitrobacteraceae</taxon>
        <taxon>Rhodopseudomonas</taxon>
    </lineage>
</organism>
<proteinExistence type="inferred from homology"/>
<gene>
    <name evidence="1" type="primary">nuoH2</name>
    <name type="ordered locus">RPD_2878</name>
</gene>
<reference key="1">
    <citation type="submission" date="2006-03" db="EMBL/GenBank/DDBJ databases">
        <title>Complete sequence of Rhodopseudomonas palustris BisB5.</title>
        <authorList>
            <consortium name="US DOE Joint Genome Institute"/>
            <person name="Copeland A."/>
            <person name="Lucas S."/>
            <person name="Lapidus A."/>
            <person name="Barry K."/>
            <person name="Detter J.C."/>
            <person name="Glavina del Rio T."/>
            <person name="Hammon N."/>
            <person name="Israni S."/>
            <person name="Dalin E."/>
            <person name="Tice H."/>
            <person name="Pitluck S."/>
            <person name="Chain P."/>
            <person name="Malfatti S."/>
            <person name="Shin M."/>
            <person name="Vergez L."/>
            <person name="Schmutz J."/>
            <person name="Larimer F."/>
            <person name="Land M."/>
            <person name="Hauser L."/>
            <person name="Pelletier D.A."/>
            <person name="Kyrpides N."/>
            <person name="Lykidis A."/>
            <person name="Oda Y."/>
            <person name="Harwood C.S."/>
            <person name="Richardson P."/>
        </authorList>
    </citation>
    <scope>NUCLEOTIDE SEQUENCE [LARGE SCALE GENOMIC DNA]</scope>
    <source>
        <strain>BisB5</strain>
    </source>
</reference>
<keyword id="KW-0997">Cell inner membrane</keyword>
<keyword id="KW-1003">Cell membrane</keyword>
<keyword id="KW-0472">Membrane</keyword>
<keyword id="KW-0520">NAD</keyword>
<keyword id="KW-0874">Quinone</keyword>
<keyword id="KW-1278">Translocase</keyword>
<keyword id="KW-0812">Transmembrane</keyword>
<keyword id="KW-1133">Transmembrane helix</keyword>
<keyword id="KW-0830">Ubiquinone</keyword>